<organism>
    <name type="scientific">Shigella sonnei (strain Ss046)</name>
    <dbReference type="NCBI Taxonomy" id="300269"/>
    <lineage>
        <taxon>Bacteria</taxon>
        <taxon>Pseudomonadati</taxon>
        <taxon>Pseudomonadota</taxon>
        <taxon>Gammaproteobacteria</taxon>
        <taxon>Enterobacterales</taxon>
        <taxon>Enterobacteriaceae</taxon>
        <taxon>Shigella</taxon>
    </lineage>
</organism>
<name>HSCA_SHISS</name>
<dbReference type="EMBL" id="CP000038">
    <property type="protein sequence ID" value="AAZ89236.1"/>
    <property type="molecule type" value="Genomic_DNA"/>
</dbReference>
<dbReference type="RefSeq" id="WP_001196613.1">
    <property type="nucleotide sequence ID" value="NC_007384.1"/>
</dbReference>
<dbReference type="SMR" id="Q3YZ26"/>
<dbReference type="GeneID" id="93774610"/>
<dbReference type="KEGG" id="ssn:SSON_2608"/>
<dbReference type="HOGENOM" id="CLU_005965_2_1_6"/>
<dbReference type="Proteomes" id="UP000002529">
    <property type="component" value="Chromosome"/>
</dbReference>
<dbReference type="GO" id="GO:0005524">
    <property type="term" value="F:ATP binding"/>
    <property type="evidence" value="ECO:0007669"/>
    <property type="project" value="UniProtKB-KW"/>
</dbReference>
<dbReference type="GO" id="GO:0016887">
    <property type="term" value="F:ATP hydrolysis activity"/>
    <property type="evidence" value="ECO:0007669"/>
    <property type="project" value="UniProtKB-UniRule"/>
</dbReference>
<dbReference type="GO" id="GO:0140662">
    <property type="term" value="F:ATP-dependent protein folding chaperone"/>
    <property type="evidence" value="ECO:0007669"/>
    <property type="project" value="InterPro"/>
</dbReference>
<dbReference type="GO" id="GO:0051082">
    <property type="term" value="F:unfolded protein binding"/>
    <property type="evidence" value="ECO:0007669"/>
    <property type="project" value="InterPro"/>
</dbReference>
<dbReference type="GO" id="GO:0016226">
    <property type="term" value="P:iron-sulfur cluster assembly"/>
    <property type="evidence" value="ECO:0007669"/>
    <property type="project" value="InterPro"/>
</dbReference>
<dbReference type="CDD" id="cd10236">
    <property type="entry name" value="ASKHA_NBD_HSP70_HscA"/>
    <property type="match status" value="1"/>
</dbReference>
<dbReference type="FunFam" id="1.20.1270.10:FF:000006">
    <property type="entry name" value="Chaperone protein HscA"/>
    <property type="match status" value="1"/>
</dbReference>
<dbReference type="FunFam" id="3.30.420.40:FF:000046">
    <property type="entry name" value="Chaperone protein HscA"/>
    <property type="match status" value="1"/>
</dbReference>
<dbReference type="FunFam" id="3.90.640.10:FF:000013">
    <property type="entry name" value="Chaperone protein HscA"/>
    <property type="match status" value="1"/>
</dbReference>
<dbReference type="FunFam" id="2.60.34.10:FF:000005">
    <property type="entry name" value="Chaperone protein HscA homolog"/>
    <property type="match status" value="1"/>
</dbReference>
<dbReference type="FunFam" id="3.30.420.40:FF:000020">
    <property type="entry name" value="Chaperone protein HscA homolog"/>
    <property type="match status" value="1"/>
</dbReference>
<dbReference type="Gene3D" id="1.20.1270.10">
    <property type="match status" value="1"/>
</dbReference>
<dbReference type="Gene3D" id="3.30.420.40">
    <property type="match status" value="2"/>
</dbReference>
<dbReference type="Gene3D" id="3.90.640.10">
    <property type="entry name" value="Actin, Chain A, domain 4"/>
    <property type="match status" value="1"/>
</dbReference>
<dbReference type="Gene3D" id="2.60.34.10">
    <property type="entry name" value="Substrate Binding Domain Of DNAk, Chain A, domain 1"/>
    <property type="match status" value="1"/>
</dbReference>
<dbReference type="HAMAP" id="MF_00679">
    <property type="entry name" value="HscA"/>
    <property type="match status" value="1"/>
</dbReference>
<dbReference type="InterPro" id="IPR043129">
    <property type="entry name" value="ATPase_NBD"/>
</dbReference>
<dbReference type="InterPro" id="IPR018181">
    <property type="entry name" value="Heat_shock_70_CS"/>
</dbReference>
<dbReference type="InterPro" id="IPR042039">
    <property type="entry name" value="HscA_NBD"/>
</dbReference>
<dbReference type="InterPro" id="IPR029048">
    <property type="entry name" value="HSP70_C_sf"/>
</dbReference>
<dbReference type="InterPro" id="IPR029047">
    <property type="entry name" value="HSP70_peptide-bd_sf"/>
</dbReference>
<dbReference type="InterPro" id="IPR013126">
    <property type="entry name" value="Hsp_70_fam"/>
</dbReference>
<dbReference type="InterPro" id="IPR010236">
    <property type="entry name" value="ISC_FeS_clus_asmbl_HscA"/>
</dbReference>
<dbReference type="NCBIfam" id="TIGR01991">
    <property type="entry name" value="HscA"/>
    <property type="match status" value="1"/>
</dbReference>
<dbReference type="NCBIfam" id="NF003520">
    <property type="entry name" value="PRK05183.1"/>
    <property type="match status" value="1"/>
</dbReference>
<dbReference type="PANTHER" id="PTHR19375">
    <property type="entry name" value="HEAT SHOCK PROTEIN 70KDA"/>
    <property type="match status" value="1"/>
</dbReference>
<dbReference type="Pfam" id="PF00012">
    <property type="entry name" value="HSP70"/>
    <property type="match status" value="1"/>
</dbReference>
<dbReference type="PRINTS" id="PR00301">
    <property type="entry name" value="HEATSHOCK70"/>
</dbReference>
<dbReference type="SUPFAM" id="SSF53067">
    <property type="entry name" value="Actin-like ATPase domain"/>
    <property type="match status" value="2"/>
</dbReference>
<dbReference type="SUPFAM" id="SSF100934">
    <property type="entry name" value="Heat shock protein 70kD (HSP70), C-terminal subdomain"/>
    <property type="match status" value="1"/>
</dbReference>
<dbReference type="SUPFAM" id="SSF100920">
    <property type="entry name" value="Heat shock protein 70kD (HSP70), peptide-binding domain"/>
    <property type="match status" value="1"/>
</dbReference>
<dbReference type="PROSITE" id="PS00297">
    <property type="entry name" value="HSP70_1"/>
    <property type="match status" value="1"/>
</dbReference>
<dbReference type="PROSITE" id="PS00329">
    <property type="entry name" value="HSP70_2"/>
    <property type="match status" value="1"/>
</dbReference>
<dbReference type="PROSITE" id="PS01036">
    <property type="entry name" value="HSP70_3"/>
    <property type="match status" value="1"/>
</dbReference>
<keyword id="KW-0067">ATP-binding</keyword>
<keyword id="KW-0143">Chaperone</keyword>
<keyword id="KW-0547">Nucleotide-binding</keyword>
<keyword id="KW-1185">Reference proteome</keyword>
<keyword id="KW-0346">Stress response</keyword>
<protein>
    <recommendedName>
        <fullName evidence="1">Chaperone protein HscA</fullName>
    </recommendedName>
    <alternativeName>
        <fullName evidence="1">Hsc66</fullName>
    </alternativeName>
</protein>
<gene>
    <name evidence="1" type="primary">hscA</name>
    <name type="ordered locus">SSON_2608</name>
</gene>
<reference key="1">
    <citation type="journal article" date="2005" name="Nucleic Acids Res.">
        <title>Genome dynamics and diversity of Shigella species, the etiologic agents of bacillary dysentery.</title>
        <authorList>
            <person name="Yang F."/>
            <person name="Yang J."/>
            <person name="Zhang X."/>
            <person name="Chen L."/>
            <person name="Jiang Y."/>
            <person name="Yan Y."/>
            <person name="Tang X."/>
            <person name="Wang J."/>
            <person name="Xiong Z."/>
            <person name="Dong J."/>
            <person name="Xue Y."/>
            <person name="Zhu Y."/>
            <person name="Xu X."/>
            <person name="Sun L."/>
            <person name="Chen S."/>
            <person name="Nie H."/>
            <person name="Peng J."/>
            <person name="Xu J."/>
            <person name="Wang Y."/>
            <person name="Yuan Z."/>
            <person name="Wen Y."/>
            <person name="Yao Z."/>
            <person name="Shen Y."/>
            <person name="Qiang B."/>
            <person name="Hou Y."/>
            <person name="Yu J."/>
            <person name="Jin Q."/>
        </authorList>
    </citation>
    <scope>NUCLEOTIDE SEQUENCE [LARGE SCALE GENOMIC DNA]</scope>
    <source>
        <strain>Ss046</strain>
    </source>
</reference>
<comment type="function">
    <text evidence="1">Chaperone involved in the maturation of iron-sulfur cluster-containing proteins. Has a low intrinsic ATPase activity which is markedly stimulated by HscB. Involved in the maturation of IscU.</text>
</comment>
<comment type="similarity">
    <text evidence="1">Belongs to the heat shock protein 70 family.</text>
</comment>
<accession>Q3YZ26</accession>
<sequence length="616" mass="65652">MALLQISEPGLSAAPHQRRLAAGIDLGTTNSLVATVRSGQAETLADHEGRHLLPSVVHYQQQGHSVGYDARTNAALDTANTISSVKRLMGRSLADIQQRYPHLPYQFQASENGLPMIETAAGLLNPVRVSADILKALAARATEALAGELDGVVITVPAYFDDAQRQGTKDAARLAGLHVLRLLNEPTAAAIAYGLDSGQEGVIAVYDLGGGTFDISILRLSRGVFEVLATGGDSALGGDDFDHLLADYIREQAGIPDRSDNRVQRELLDAAIAAKIALSDADSVTVNVAGWQGEISREQFNELIAPLVKRTLLACRRALKDAGVEADEVLEVVMVGGSTRVPLVRERVGEFFGRPPLTSIDPDKVVAIGAAIQADILVGNKPDSEMLLLDVIPLSLGLETMGGLVEKVIPRNTTIPVARAQDFTTFKDGQTAMSIHVMQGERELVQDCRSLARFALRGIPALPAGGAHIRVTFQVDADGLLSVTAMEKSTGVEASIQVKPSYGLTDSEIASMIKDSMSYAEQDVKARMLAEQKVEAARVLESLHGALAADAALLSAAERQVIDDAAAHLSEVAQGDDVDAIEQAIKNVDKQTQDFAARRMDQSVRRALKGHSVDEV</sequence>
<evidence type="ECO:0000255" key="1">
    <source>
        <dbReference type="HAMAP-Rule" id="MF_00679"/>
    </source>
</evidence>
<proteinExistence type="inferred from homology"/>
<feature type="chain" id="PRO_1000044898" description="Chaperone protein HscA">
    <location>
        <begin position="1"/>
        <end position="616"/>
    </location>
</feature>